<sequence length="295" mass="32113">MGKLRQIAFYGKGGIGKSTTSQNTLAALVEMGQKILIVGCDPKADSTRLILNTKLQDTVLHLAAEAGSVEDLEVEDVVKIGYKGIKCTEAGGPEPGVGCAGRGVITAINFLEENGAYDDVDYVSYDVLGDVVCGGFAMPIRENKAQEIYIVMSGEMMALYAANNIAKGILKYANSGGVRLGGLICNERKTDRELELAEALAAKLGCKMIHFVPRNNVVQHAELRRETVIQYDPTCSQAQEYRELARKIHENSGKGVIPTPITMEELEEMLMDFGIMQSEEDREKQIAEMEAAMKA</sequence>
<reference key="1">
    <citation type="journal article" date="1986" name="Gene">
        <title>A DNA fragment hybridizing to a nif probe in Rhodobacter capsulatus is homologous to a 16S rRNA gene.</title>
        <authorList>
            <person name="Schumann J.P."/>
            <person name="Waitches G.M."/>
            <person name="Scolnik P.A."/>
        </authorList>
    </citation>
    <scope>NUCLEOTIDE SEQUENCE [GENOMIC DNA]</scope>
</reference>
<reference key="2">
    <citation type="journal article" date="1993" name="Gene">
        <title>Sequence and transcript analysis of the nitrogenase structural gene operon (nifHDK) of Rhodobacter capsulatus: evidence for intramolecular processing of nifHDK mRNA.</title>
        <authorList>
            <person name="Willison J.C."/>
            <person name="Pierrard J."/>
            <person name="Huebner P."/>
        </authorList>
    </citation>
    <scope>NUCLEOTIDE SEQUENCE [GENOMIC DNA]</scope>
    <source>
        <strain>ATCC 33303 / B10</strain>
    </source>
</reference>
<keyword id="KW-0004">4Fe-4S</keyword>
<keyword id="KW-0013">ADP-ribosylation</keyword>
<keyword id="KW-0067">ATP-binding</keyword>
<keyword id="KW-0408">Iron</keyword>
<keyword id="KW-0411">Iron-sulfur</keyword>
<keyword id="KW-0479">Metal-binding</keyword>
<keyword id="KW-0535">Nitrogen fixation</keyword>
<keyword id="KW-0547">Nucleotide-binding</keyword>
<keyword id="KW-0560">Oxidoreductase</keyword>
<dbReference type="EC" id="1.18.6.1"/>
<dbReference type="EMBL" id="M15270">
    <property type="protein sequence ID" value="AAA26140.1"/>
    <property type="molecule type" value="Genomic_DNA"/>
</dbReference>
<dbReference type="EMBL" id="X63352">
    <property type="protein sequence ID" value="CAA44954.1"/>
    <property type="molecule type" value="Genomic_DNA"/>
</dbReference>
<dbReference type="PIR" id="JN0888">
    <property type="entry name" value="JN0888"/>
</dbReference>
<dbReference type="RefSeq" id="WP_013066316.1">
    <property type="nucleotide sequence ID" value="NZ_VIBE01000010.1"/>
</dbReference>
<dbReference type="SMR" id="P0CY95"/>
<dbReference type="GeneID" id="31489522"/>
<dbReference type="OMA" id="YGDVKCV"/>
<dbReference type="GO" id="GO:0051539">
    <property type="term" value="F:4 iron, 4 sulfur cluster binding"/>
    <property type="evidence" value="ECO:0007669"/>
    <property type="project" value="UniProtKB-KW"/>
</dbReference>
<dbReference type="GO" id="GO:0005524">
    <property type="term" value="F:ATP binding"/>
    <property type="evidence" value="ECO:0007669"/>
    <property type="project" value="UniProtKB-UniRule"/>
</dbReference>
<dbReference type="GO" id="GO:0046872">
    <property type="term" value="F:metal ion binding"/>
    <property type="evidence" value="ECO:0007669"/>
    <property type="project" value="UniProtKB-KW"/>
</dbReference>
<dbReference type="GO" id="GO:0016163">
    <property type="term" value="F:nitrogenase activity"/>
    <property type="evidence" value="ECO:0007669"/>
    <property type="project" value="UniProtKB-UniRule"/>
</dbReference>
<dbReference type="GO" id="GO:0009399">
    <property type="term" value="P:nitrogen fixation"/>
    <property type="evidence" value="ECO:0007669"/>
    <property type="project" value="UniProtKB-UniRule"/>
</dbReference>
<dbReference type="CDD" id="cd02040">
    <property type="entry name" value="NifH"/>
    <property type="match status" value="1"/>
</dbReference>
<dbReference type="FunFam" id="3.40.50.300:FF:001379">
    <property type="entry name" value="Nitrogenase iron protein 1"/>
    <property type="match status" value="1"/>
</dbReference>
<dbReference type="Gene3D" id="3.40.50.300">
    <property type="entry name" value="P-loop containing nucleotide triphosphate hydrolases"/>
    <property type="match status" value="1"/>
</dbReference>
<dbReference type="HAMAP" id="MF_00533">
    <property type="entry name" value="NifH"/>
    <property type="match status" value="1"/>
</dbReference>
<dbReference type="InterPro" id="IPR030655">
    <property type="entry name" value="NifH/chlL_CS"/>
</dbReference>
<dbReference type="InterPro" id="IPR000392">
    <property type="entry name" value="NifH/frxC"/>
</dbReference>
<dbReference type="InterPro" id="IPR005977">
    <property type="entry name" value="Nitrogenase_Fe_NifH"/>
</dbReference>
<dbReference type="InterPro" id="IPR027417">
    <property type="entry name" value="P-loop_NTPase"/>
</dbReference>
<dbReference type="NCBIfam" id="TIGR01287">
    <property type="entry name" value="nifH"/>
    <property type="match status" value="1"/>
</dbReference>
<dbReference type="PANTHER" id="PTHR42864">
    <property type="entry name" value="LIGHT-INDEPENDENT PROTOCHLOROPHYLLIDE REDUCTASE IRON-SULFUR ATP-BINDING PROTEIN"/>
    <property type="match status" value="1"/>
</dbReference>
<dbReference type="PANTHER" id="PTHR42864:SF2">
    <property type="entry name" value="LIGHT-INDEPENDENT PROTOCHLOROPHYLLIDE REDUCTASE IRON-SULFUR ATP-BINDING PROTEIN"/>
    <property type="match status" value="1"/>
</dbReference>
<dbReference type="Pfam" id="PF00142">
    <property type="entry name" value="Fer4_NifH"/>
    <property type="match status" value="1"/>
</dbReference>
<dbReference type="PIRSF" id="PIRSF000363">
    <property type="entry name" value="Nitrogenase_iron"/>
    <property type="match status" value="1"/>
</dbReference>
<dbReference type="PRINTS" id="PR00091">
    <property type="entry name" value="NITROGNASEII"/>
</dbReference>
<dbReference type="SUPFAM" id="SSF52540">
    <property type="entry name" value="P-loop containing nucleoside triphosphate hydrolases"/>
    <property type="match status" value="1"/>
</dbReference>
<dbReference type="PROSITE" id="PS00746">
    <property type="entry name" value="NIFH_FRXC_1"/>
    <property type="match status" value="1"/>
</dbReference>
<dbReference type="PROSITE" id="PS00692">
    <property type="entry name" value="NIFH_FRXC_2"/>
    <property type="match status" value="1"/>
</dbReference>
<dbReference type="PROSITE" id="PS51026">
    <property type="entry name" value="NIFH_FRXC_3"/>
    <property type="match status" value="1"/>
</dbReference>
<organism>
    <name type="scientific">Rhodobacter capsulatus</name>
    <name type="common">Rhodopseudomonas capsulata</name>
    <dbReference type="NCBI Taxonomy" id="1061"/>
    <lineage>
        <taxon>Bacteria</taxon>
        <taxon>Pseudomonadati</taxon>
        <taxon>Pseudomonadota</taxon>
        <taxon>Alphaproteobacteria</taxon>
        <taxon>Rhodobacterales</taxon>
        <taxon>Rhodobacter group</taxon>
        <taxon>Rhodobacter</taxon>
    </lineage>
</organism>
<proteinExistence type="inferred from homology"/>
<accession>P0CY95</accession>
<accession>P08718</accession>
<protein>
    <recommendedName>
        <fullName>Nitrogenase iron protein 1</fullName>
        <ecNumber>1.18.6.1</ecNumber>
    </recommendedName>
    <alternativeName>
        <fullName>Nitrogenase Fe protein 1</fullName>
    </alternativeName>
    <alternativeName>
        <fullName>Nitrogenase component II</fullName>
    </alternativeName>
    <alternativeName>
        <fullName>Nitrogenase reductase</fullName>
    </alternativeName>
</protein>
<comment type="function">
    <text evidence="1">The key enzymatic reactions in nitrogen fixation are catalyzed by the nitrogenase complex, which has 2 components: the iron protein and the molybdenum-iron protein.</text>
</comment>
<comment type="catalytic activity">
    <reaction>
        <text>N2 + 8 reduced [2Fe-2S]-[ferredoxin] + 16 ATP + 16 H2O = H2 + 8 oxidized [2Fe-2S]-[ferredoxin] + 2 NH4(+) + 16 ADP + 16 phosphate + 6 H(+)</text>
        <dbReference type="Rhea" id="RHEA:21448"/>
        <dbReference type="Rhea" id="RHEA-COMP:10000"/>
        <dbReference type="Rhea" id="RHEA-COMP:10001"/>
        <dbReference type="ChEBI" id="CHEBI:15377"/>
        <dbReference type="ChEBI" id="CHEBI:15378"/>
        <dbReference type="ChEBI" id="CHEBI:17997"/>
        <dbReference type="ChEBI" id="CHEBI:18276"/>
        <dbReference type="ChEBI" id="CHEBI:28938"/>
        <dbReference type="ChEBI" id="CHEBI:30616"/>
        <dbReference type="ChEBI" id="CHEBI:33737"/>
        <dbReference type="ChEBI" id="CHEBI:33738"/>
        <dbReference type="ChEBI" id="CHEBI:43474"/>
        <dbReference type="ChEBI" id="CHEBI:456216"/>
        <dbReference type="EC" id="1.18.6.1"/>
    </reaction>
</comment>
<comment type="cofactor">
    <cofactor evidence="1">
        <name>[4Fe-4S] cluster</name>
        <dbReference type="ChEBI" id="CHEBI:49883"/>
    </cofactor>
    <text evidence="1">Binds 1 [4Fe-4S] cluster per dimer.</text>
</comment>
<comment type="subunit">
    <text evidence="1">Homodimer.</text>
</comment>
<comment type="PTM">
    <text evidence="1">The reversible ADP-ribosylation of Arg-102 inactivates the nitrogenase reductase and regulates nitrogenase activity.</text>
</comment>
<comment type="similarity">
    <text evidence="3">Belongs to the NifH/BchL/ChlL family.</text>
</comment>
<feature type="chain" id="PRO_0000139527" description="Nitrogenase iron protein 1">
    <location>
        <begin position="1"/>
        <end position="295"/>
    </location>
</feature>
<feature type="binding site" evidence="2">
    <location>
        <begin position="11"/>
        <end position="18"/>
    </location>
    <ligand>
        <name>ATP</name>
        <dbReference type="ChEBI" id="CHEBI:30616"/>
    </ligand>
</feature>
<feature type="binding site" evidence="1">
    <location>
        <position position="99"/>
    </location>
    <ligand>
        <name>[4Fe-4S] cluster</name>
        <dbReference type="ChEBI" id="CHEBI:49883"/>
        <note>ligand shared between dimeric partners</note>
    </ligand>
</feature>
<feature type="binding site" evidence="1">
    <location>
        <position position="133"/>
    </location>
    <ligand>
        <name>[4Fe-4S] cluster</name>
        <dbReference type="ChEBI" id="CHEBI:49883"/>
        <note>ligand shared between dimeric partners</note>
    </ligand>
</feature>
<feature type="modified residue" description="ADP-ribosylarginine; by dinitrogenase reductase ADP-ribosyltransferase" evidence="1">
    <location>
        <position position="102"/>
    </location>
</feature>
<feature type="sequence conflict" description="In Ref. 1; AAA26140." evidence="3" ref="1">
    <original>A</original>
    <variation>V</variation>
    <location>
        <position position="66"/>
    </location>
</feature>
<feature type="sequence conflict" description="In Ref. 1; AAA26140." evidence="3" ref="1">
    <original>V</original>
    <variation>L</variation>
    <location>
        <position position="74"/>
    </location>
</feature>
<feature type="sequence conflict" description="In Ref. 1; AAA26140." evidence="3" ref="1">
    <original>K</original>
    <variation>R</variation>
    <location>
        <position position="83"/>
    </location>
</feature>
<feature type="sequence conflict" description="In Ref. 1; AAA26140." evidence="3" ref="1">
    <original>A</original>
    <variation>S</variation>
    <location>
        <position position="90"/>
    </location>
</feature>
<feature type="sequence conflict" description="In Ref. 1; AAA26140." evidence="3" ref="1">
    <original>M</original>
    <variation>C</variation>
    <location>
        <position position="152"/>
    </location>
</feature>
<feature type="sequence conflict" description="In Ref. 1; AAA26140." evidence="3" ref="1">
    <original>L</original>
    <variation>V</variation>
    <location>
        <position position="159"/>
    </location>
</feature>
<feature type="sequence conflict" description="In Ref. 1; AAA26140." evidence="3" ref="1">
    <original>A</original>
    <variation>P</variation>
    <location>
        <position position="166"/>
    </location>
</feature>
<feature type="sequence conflict" description="In Ref. 1; AAA26140." evidence="3" ref="1">
    <original>IHENSGK</original>
    <variation>VPRNLGQ</variation>
    <location>
        <begin position="248"/>
        <end position="254"/>
    </location>
</feature>
<feature type="sequence conflict" description="In Ref. 1; AAA26140." evidence="3" ref="1">
    <original>A</original>
    <variation>P</variation>
    <location>
        <position position="295"/>
    </location>
</feature>
<evidence type="ECO:0000250" key="1"/>
<evidence type="ECO:0000255" key="2"/>
<evidence type="ECO:0000305" key="3"/>
<gene>
    <name type="primary">nifH</name>
</gene>
<name>NIFH1_RHOCA</name>